<name>CX5B1_ARATH</name>
<protein>
    <recommendedName>
        <fullName>Cytochrome c oxidase subunit 5b-1, mitochondrial</fullName>
        <shortName>AtCOX5b-1</shortName>
    </recommendedName>
</protein>
<proteinExistence type="evidence at protein level"/>
<accession>Q9LW15</accession>
<reference key="1">
    <citation type="journal article" date="2000" name="DNA Res.">
        <title>Structural analysis of Arabidopsis thaliana chromosome 3. I. Sequence features of the regions of 4,504,864 bp covered by sixty P1 and TAC clones.</title>
        <authorList>
            <person name="Sato S."/>
            <person name="Nakamura Y."/>
            <person name="Kaneko T."/>
            <person name="Katoh T."/>
            <person name="Asamizu E."/>
            <person name="Tabata S."/>
        </authorList>
    </citation>
    <scope>NUCLEOTIDE SEQUENCE [LARGE SCALE GENOMIC DNA]</scope>
    <source>
        <strain>cv. Columbia</strain>
    </source>
</reference>
<reference key="2">
    <citation type="journal article" date="2017" name="Plant J.">
        <title>Araport11: a complete reannotation of the Arabidopsis thaliana reference genome.</title>
        <authorList>
            <person name="Cheng C.Y."/>
            <person name="Krishnakumar V."/>
            <person name="Chan A.P."/>
            <person name="Thibaud-Nissen F."/>
            <person name="Schobel S."/>
            <person name="Town C.D."/>
        </authorList>
    </citation>
    <scope>GENOME REANNOTATION</scope>
    <source>
        <strain>cv. Columbia</strain>
    </source>
</reference>
<reference key="3">
    <citation type="journal article" date="2003" name="Science">
        <title>Empirical analysis of transcriptional activity in the Arabidopsis genome.</title>
        <authorList>
            <person name="Yamada K."/>
            <person name="Lim J."/>
            <person name="Dale J.M."/>
            <person name="Chen H."/>
            <person name="Shinn P."/>
            <person name="Palm C.J."/>
            <person name="Southwick A.M."/>
            <person name="Wu H.C."/>
            <person name="Kim C.J."/>
            <person name="Nguyen M."/>
            <person name="Pham P.K."/>
            <person name="Cheuk R.F."/>
            <person name="Karlin-Newmann G."/>
            <person name="Liu S.X."/>
            <person name="Lam B."/>
            <person name="Sakano H."/>
            <person name="Wu T."/>
            <person name="Yu G."/>
            <person name="Miranda M."/>
            <person name="Quach H.L."/>
            <person name="Tripp M."/>
            <person name="Chang C.H."/>
            <person name="Lee J.M."/>
            <person name="Toriumi M.J."/>
            <person name="Chan M.M."/>
            <person name="Tang C.C."/>
            <person name="Onodera C.S."/>
            <person name="Deng J.M."/>
            <person name="Akiyama K."/>
            <person name="Ansari Y."/>
            <person name="Arakawa T."/>
            <person name="Banh J."/>
            <person name="Banno F."/>
            <person name="Bowser L."/>
            <person name="Brooks S.Y."/>
            <person name="Carninci P."/>
            <person name="Chao Q."/>
            <person name="Choy N."/>
            <person name="Enju A."/>
            <person name="Goldsmith A.D."/>
            <person name="Gurjal M."/>
            <person name="Hansen N.F."/>
            <person name="Hayashizaki Y."/>
            <person name="Johnson-Hopson C."/>
            <person name="Hsuan V.W."/>
            <person name="Iida K."/>
            <person name="Karnes M."/>
            <person name="Khan S."/>
            <person name="Koesema E."/>
            <person name="Ishida J."/>
            <person name="Jiang P.X."/>
            <person name="Jones T."/>
            <person name="Kawai J."/>
            <person name="Kamiya A."/>
            <person name="Meyers C."/>
            <person name="Nakajima M."/>
            <person name="Narusaka M."/>
            <person name="Seki M."/>
            <person name="Sakurai T."/>
            <person name="Satou M."/>
            <person name="Tamse R."/>
            <person name="Vaysberg M."/>
            <person name="Wallender E.K."/>
            <person name="Wong C."/>
            <person name="Yamamura Y."/>
            <person name="Yuan S."/>
            <person name="Shinozaki K."/>
            <person name="Davis R.W."/>
            <person name="Theologis A."/>
            <person name="Ecker J.R."/>
        </authorList>
    </citation>
    <scope>NUCLEOTIDE SEQUENCE [LARGE SCALE MRNA]</scope>
    <source>
        <strain>cv. Columbia</strain>
    </source>
</reference>
<reference key="4">
    <citation type="submission" date="2002-03" db="EMBL/GenBank/DDBJ databases">
        <title>Full-length cDNA from Arabidopsis thaliana.</title>
        <authorList>
            <person name="Brover V.V."/>
            <person name="Troukhan M.E."/>
            <person name="Alexandrov N.A."/>
            <person name="Lu Y.-P."/>
            <person name="Flavell R.B."/>
            <person name="Feldmann K.A."/>
        </authorList>
    </citation>
    <scope>NUCLEOTIDE SEQUENCE [LARGE SCALE MRNA]</scope>
</reference>
<reference key="5">
    <citation type="journal article" date="2015" name="J. Exp. Bot.">
        <title>Identification of cleavage sites and substrate proteins for two mitochondrial intermediate peptidases in Arabidopsis thaliana.</title>
        <authorList>
            <person name="Carrie C."/>
            <person name="Venne A.S."/>
            <person name="Zahedi R.P."/>
            <person name="Soll J."/>
        </authorList>
    </citation>
    <scope>IDENTIFICATION BY MASS SPECTROMETRY</scope>
    <scope>CLEAVAGE OF TRANSIT PEPTIDE AFTER PHE-55</scope>
</reference>
<comment type="function">
    <text evidence="1">This protein is one of the nuclear-coded polypeptide chains of cytochrome c oxidase, the terminal oxidase in mitochondrial electron transport.</text>
</comment>
<comment type="subcellular location">
    <subcellularLocation>
        <location evidence="1 5">Mitochondrion inner membrane</location>
    </subcellularLocation>
</comment>
<comment type="alternative products">
    <event type="alternative splicing"/>
    <isoform>
        <id>Q9LW15-1</id>
        <name>1</name>
        <sequence type="displayed"/>
    </isoform>
    <text>A number of isoforms are produced. According to EST sequences.</text>
</comment>
<comment type="similarity">
    <text evidence="4">Belongs to the cytochrome c oxidase subunit 5B (TC 3.D.4.11) family.</text>
</comment>
<sequence>MWRRIVSSQLKTLAADVVAASPRRSIAATTRPVGFYLAANRSAISASSFVIPRRFSSDSVETPATKKVEDVMPIATGHEKEELEAELEGRRLDDIDFPEGPFGTKEAPAIVKSYYDKRIVGCPGGEGEDEHDVVWFWLEKGKSFECPVCTQYFELEVVGPGGPPDGHGDEDDEHHH</sequence>
<feature type="transit peptide" description="Mitochondrion" evidence="3">
    <location>
        <begin position="1"/>
        <end position="55"/>
    </location>
</feature>
<feature type="chain" id="PRO_0000412471" description="Cytochrome c oxidase subunit 5b-1, mitochondrial">
    <location>
        <begin position="56"/>
        <end position="176"/>
    </location>
</feature>
<feature type="region of interest" description="Disordered" evidence="2">
    <location>
        <begin position="157"/>
        <end position="176"/>
    </location>
</feature>
<feature type="binding site" evidence="1">
    <location>
        <position position="122"/>
    </location>
    <ligand>
        <name>Zn(2+)</name>
        <dbReference type="ChEBI" id="CHEBI:29105"/>
    </ligand>
</feature>
<feature type="binding site" evidence="1">
    <location>
        <position position="146"/>
    </location>
    <ligand>
        <name>Zn(2+)</name>
        <dbReference type="ChEBI" id="CHEBI:29105"/>
    </ligand>
</feature>
<feature type="binding site" evidence="1">
    <location>
        <position position="149"/>
    </location>
    <ligand>
        <name>Zn(2+)</name>
        <dbReference type="ChEBI" id="CHEBI:29105"/>
    </ligand>
</feature>
<keyword id="KW-0025">Alternative splicing</keyword>
<keyword id="KW-0472">Membrane</keyword>
<keyword id="KW-0479">Metal-binding</keyword>
<keyword id="KW-0496">Mitochondrion</keyword>
<keyword id="KW-0999">Mitochondrion inner membrane</keyword>
<keyword id="KW-1185">Reference proteome</keyword>
<keyword id="KW-0809">Transit peptide</keyword>
<keyword id="KW-0862">Zinc</keyword>
<organism>
    <name type="scientific">Arabidopsis thaliana</name>
    <name type="common">Mouse-ear cress</name>
    <dbReference type="NCBI Taxonomy" id="3702"/>
    <lineage>
        <taxon>Eukaryota</taxon>
        <taxon>Viridiplantae</taxon>
        <taxon>Streptophyta</taxon>
        <taxon>Embryophyta</taxon>
        <taxon>Tracheophyta</taxon>
        <taxon>Spermatophyta</taxon>
        <taxon>Magnoliopsida</taxon>
        <taxon>eudicotyledons</taxon>
        <taxon>Gunneridae</taxon>
        <taxon>Pentapetalae</taxon>
        <taxon>rosids</taxon>
        <taxon>malvids</taxon>
        <taxon>Brassicales</taxon>
        <taxon>Brassicaceae</taxon>
        <taxon>Camelineae</taxon>
        <taxon>Arabidopsis</taxon>
    </lineage>
</organism>
<gene>
    <name type="primary">COX5B-1</name>
    <name type="ordered locus">At3g15640</name>
    <name type="ORF">MSJ11.4</name>
</gene>
<evidence type="ECO:0000255" key="1">
    <source>
        <dbReference type="PROSITE-ProRule" id="PRU00692"/>
    </source>
</evidence>
<evidence type="ECO:0000256" key="2">
    <source>
        <dbReference type="SAM" id="MobiDB-lite"/>
    </source>
</evidence>
<evidence type="ECO:0000269" key="3">
    <source>
    </source>
</evidence>
<evidence type="ECO:0000305" key="4"/>
<evidence type="ECO:0000305" key="5">
    <source>
    </source>
</evidence>
<dbReference type="EMBL" id="AB017071">
    <property type="protein sequence ID" value="BAB02295.1"/>
    <property type="molecule type" value="Genomic_DNA"/>
</dbReference>
<dbReference type="EMBL" id="CP002686">
    <property type="protein sequence ID" value="AEE75706.1"/>
    <property type="molecule type" value="Genomic_DNA"/>
</dbReference>
<dbReference type="EMBL" id="AF367258">
    <property type="protein sequence ID" value="AAK56247.1"/>
    <property type="molecule type" value="mRNA"/>
</dbReference>
<dbReference type="EMBL" id="AY055100">
    <property type="protein sequence ID" value="AAL05900.1"/>
    <property type="molecule type" value="mRNA"/>
</dbReference>
<dbReference type="EMBL" id="AY087329">
    <property type="protein sequence ID" value="AAM64879.1"/>
    <property type="molecule type" value="mRNA"/>
</dbReference>
<dbReference type="RefSeq" id="NP_188185.1">
    <molecule id="Q9LW15-1"/>
    <property type="nucleotide sequence ID" value="NM_112434.3"/>
</dbReference>
<dbReference type="SMR" id="Q9LW15"/>
<dbReference type="BioGRID" id="6140">
    <property type="interactions" value="2"/>
</dbReference>
<dbReference type="FunCoup" id="Q9LW15">
    <property type="interactions" value="2157"/>
</dbReference>
<dbReference type="IntAct" id="Q9LW15">
    <property type="interactions" value="1"/>
</dbReference>
<dbReference type="STRING" id="3702.Q9LW15"/>
<dbReference type="iPTMnet" id="Q9LW15"/>
<dbReference type="MetOSite" id="Q9LW15"/>
<dbReference type="PaxDb" id="3702-AT3G15640.1"/>
<dbReference type="ProteomicsDB" id="220422">
    <molecule id="Q9LW15-1"/>
</dbReference>
<dbReference type="EnsemblPlants" id="AT3G15640.1">
    <molecule id="Q9LW15-1"/>
    <property type="protein sequence ID" value="AT3G15640.1"/>
    <property type="gene ID" value="AT3G15640"/>
</dbReference>
<dbReference type="GeneID" id="820806"/>
<dbReference type="Gramene" id="AT3G15640.1">
    <molecule id="Q9LW15-1"/>
    <property type="protein sequence ID" value="AT3G15640.1"/>
    <property type="gene ID" value="AT3G15640"/>
</dbReference>
<dbReference type="KEGG" id="ath:AT3G15640"/>
<dbReference type="Araport" id="AT3G15640"/>
<dbReference type="TAIR" id="AT3G15640"/>
<dbReference type="eggNOG" id="KOG3352">
    <property type="taxonomic scope" value="Eukaryota"/>
</dbReference>
<dbReference type="InParanoid" id="Q9LW15"/>
<dbReference type="OrthoDB" id="10249250at2759"/>
<dbReference type="PhylomeDB" id="Q9LW15"/>
<dbReference type="PRO" id="PR:Q9LW15"/>
<dbReference type="Proteomes" id="UP000006548">
    <property type="component" value="Chromosome 3"/>
</dbReference>
<dbReference type="ExpressionAtlas" id="Q9LW15">
    <property type="expression patterns" value="baseline and differential"/>
</dbReference>
<dbReference type="GO" id="GO:0009535">
    <property type="term" value="C:chloroplast thylakoid membrane"/>
    <property type="evidence" value="ECO:0007005"/>
    <property type="project" value="TAIR"/>
</dbReference>
<dbReference type="GO" id="GO:0005829">
    <property type="term" value="C:cytosol"/>
    <property type="evidence" value="ECO:0007005"/>
    <property type="project" value="TAIR"/>
</dbReference>
<dbReference type="GO" id="GO:0005743">
    <property type="term" value="C:mitochondrial inner membrane"/>
    <property type="evidence" value="ECO:0007669"/>
    <property type="project" value="UniProtKB-SubCell"/>
</dbReference>
<dbReference type="GO" id="GO:0005739">
    <property type="term" value="C:mitochondrion"/>
    <property type="evidence" value="ECO:0000314"/>
    <property type="project" value="TAIR"/>
</dbReference>
<dbReference type="GO" id="GO:0045277">
    <property type="term" value="C:respiratory chain complex IV"/>
    <property type="evidence" value="ECO:0007669"/>
    <property type="project" value="InterPro"/>
</dbReference>
<dbReference type="GO" id="GO:0050897">
    <property type="term" value="F:cobalt ion binding"/>
    <property type="evidence" value="ECO:0007005"/>
    <property type="project" value="TAIR"/>
</dbReference>
<dbReference type="GO" id="GO:0046872">
    <property type="term" value="F:metal ion binding"/>
    <property type="evidence" value="ECO:0000314"/>
    <property type="project" value="TAIR"/>
</dbReference>
<dbReference type="GO" id="GO:0008270">
    <property type="term" value="F:zinc ion binding"/>
    <property type="evidence" value="ECO:0007005"/>
    <property type="project" value="TAIR"/>
</dbReference>
<dbReference type="GO" id="GO:0006123">
    <property type="term" value="P:mitochondrial electron transport, cytochrome c to oxygen"/>
    <property type="evidence" value="ECO:0007669"/>
    <property type="project" value="InterPro"/>
</dbReference>
<dbReference type="CDD" id="cd00924">
    <property type="entry name" value="Cyt_c_Oxidase_Vb"/>
    <property type="match status" value="1"/>
</dbReference>
<dbReference type="FunFam" id="2.60.11.10:FF:000002">
    <property type="entry name" value="Cytochrome c oxidase subunit Vb"/>
    <property type="match status" value="1"/>
</dbReference>
<dbReference type="Gene3D" id="2.60.11.10">
    <property type="entry name" value="Cytochrome c oxidase, subunit Vb"/>
    <property type="match status" value="1"/>
</dbReference>
<dbReference type="InterPro" id="IPR002124">
    <property type="entry name" value="Cyt_c_oxidase_su5b"/>
</dbReference>
<dbReference type="InterPro" id="IPR036972">
    <property type="entry name" value="Cyt_c_oxidase_su5b_sf"/>
</dbReference>
<dbReference type="PANTHER" id="PTHR10122:SF0">
    <property type="entry name" value="CYTOCHROME C OXIDASE SUBUNIT 5B, ISOFORM A-RELATED"/>
    <property type="match status" value="1"/>
</dbReference>
<dbReference type="PANTHER" id="PTHR10122">
    <property type="entry name" value="CYTOCHROME C OXIDASE SUBUNIT 5B, MITOCHONDRIAL"/>
    <property type="match status" value="1"/>
</dbReference>
<dbReference type="Pfam" id="PF01215">
    <property type="entry name" value="COX5B"/>
    <property type="match status" value="1"/>
</dbReference>
<dbReference type="SUPFAM" id="SSF57802">
    <property type="entry name" value="Rubredoxin-like"/>
    <property type="match status" value="1"/>
</dbReference>
<dbReference type="PROSITE" id="PS51359">
    <property type="entry name" value="COX5B_2"/>
    <property type="match status" value="1"/>
</dbReference>